<name>MAL1_DROME</name>
<protein>
    <recommendedName>
        <fullName>Maltase A1</fullName>
        <ecNumber>3.2.1.20</ecNumber>
    </recommendedName>
    <alternativeName>
        <fullName>Larval visceral protein H</fullName>
    </alternativeName>
</protein>
<evidence type="ECO:0000250" key="1"/>
<evidence type="ECO:0000255" key="2"/>
<evidence type="ECO:0000269" key="3">
    <source>
    </source>
</evidence>
<evidence type="ECO:0000305" key="4"/>
<reference key="1">
    <citation type="journal article" date="1983" name="J. Mol. Biol.">
        <title>Two gene families clustered in a small region of the Drosophila genome.</title>
        <authorList>
            <person name="Snyder M."/>
            <person name="Davidson N."/>
        </authorList>
    </citation>
    <scope>NUCLEOTIDE SEQUENCE [GENOMIC DNA]</scope>
    <scope>DEVELOPMENTAL STAGE</scope>
</reference>
<reference key="2">
    <citation type="journal article" date="2000" name="Science">
        <title>The genome sequence of Drosophila melanogaster.</title>
        <authorList>
            <person name="Adams M.D."/>
            <person name="Celniker S.E."/>
            <person name="Holt R.A."/>
            <person name="Evans C.A."/>
            <person name="Gocayne J.D."/>
            <person name="Amanatides P.G."/>
            <person name="Scherer S.E."/>
            <person name="Li P.W."/>
            <person name="Hoskins R.A."/>
            <person name="Galle R.F."/>
            <person name="George R.A."/>
            <person name="Lewis S.E."/>
            <person name="Richards S."/>
            <person name="Ashburner M."/>
            <person name="Henderson S.N."/>
            <person name="Sutton G.G."/>
            <person name="Wortman J.R."/>
            <person name="Yandell M.D."/>
            <person name="Zhang Q."/>
            <person name="Chen L.X."/>
            <person name="Brandon R.C."/>
            <person name="Rogers Y.-H.C."/>
            <person name="Blazej R.G."/>
            <person name="Champe M."/>
            <person name="Pfeiffer B.D."/>
            <person name="Wan K.H."/>
            <person name="Doyle C."/>
            <person name="Baxter E.G."/>
            <person name="Helt G."/>
            <person name="Nelson C.R."/>
            <person name="Miklos G.L.G."/>
            <person name="Abril J.F."/>
            <person name="Agbayani A."/>
            <person name="An H.-J."/>
            <person name="Andrews-Pfannkoch C."/>
            <person name="Baldwin D."/>
            <person name="Ballew R.M."/>
            <person name="Basu A."/>
            <person name="Baxendale J."/>
            <person name="Bayraktaroglu L."/>
            <person name="Beasley E.M."/>
            <person name="Beeson K.Y."/>
            <person name="Benos P.V."/>
            <person name="Berman B.P."/>
            <person name="Bhandari D."/>
            <person name="Bolshakov S."/>
            <person name="Borkova D."/>
            <person name="Botchan M.R."/>
            <person name="Bouck J."/>
            <person name="Brokstein P."/>
            <person name="Brottier P."/>
            <person name="Burtis K.C."/>
            <person name="Busam D.A."/>
            <person name="Butler H."/>
            <person name="Cadieu E."/>
            <person name="Center A."/>
            <person name="Chandra I."/>
            <person name="Cherry J.M."/>
            <person name="Cawley S."/>
            <person name="Dahlke C."/>
            <person name="Davenport L.B."/>
            <person name="Davies P."/>
            <person name="de Pablos B."/>
            <person name="Delcher A."/>
            <person name="Deng Z."/>
            <person name="Mays A.D."/>
            <person name="Dew I."/>
            <person name="Dietz S.M."/>
            <person name="Dodson K."/>
            <person name="Doup L.E."/>
            <person name="Downes M."/>
            <person name="Dugan-Rocha S."/>
            <person name="Dunkov B.C."/>
            <person name="Dunn P."/>
            <person name="Durbin K.J."/>
            <person name="Evangelista C.C."/>
            <person name="Ferraz C."/>
            <person name="Ferriera S."/>
            <person name="Fleischmann W."/>
            <person name="Fosler C."/>
            <person name="Gabrielian A.E."/>
            <person name="Garg N.S."/>
            <person name="Gelbart W.M."/>
            <person name="Glasser K."/>
            <person name="Glodek A."/>
            <person name="Gong F."/>
            <person name="Gorrell J.H."/>
            <person name="Gu Z."/>
            <person name="Guan P."/>
            <person name="Harris M."/>
            <person name="Harris N.L."/>
            <person name="Harvey D.A."/>
            <person name="Heiman T.J."/>
            <person name="Hernandez J.R."/>
            <person name="Houck J."/>
            <person name="Hostin D."/>
            <person name="Houston K.A."/>
            <person name="Howland T.J."/>
            <person name="Wei M.-H."/>
            <person name="Ibegwam C."/>
            <person name="Jalali M."/>
            <person name="Kalush F."/>
            <person name="Karpen G.H."/>
            <person name="Ke Z."/>
            <person name="Kennison J.A."/>
            <person name="Ketchum K.A."/>
            <person name="Kimmel B.E."/>
            <person name="Kodira C.D."/>
            <person name="Kraft C.L."/>
            <person name="Kravitz S."/>
            <person name="Kulp D."/>
            <person name="Lai Z."/>
            <person name="Lasko P."/>
            <person name="Lei Y."/>
            <person name="Levitsky A.A."/>
            <person name="Li J.H."/>
            <person name="Li Z."/>
            <person name="Liang Y."/>
            <person name="Lin X."/>
            <person name="Liu X."/>
            <person name="Mattei B."/>
            <person name="McIntosh T.C."/>
            <person name="McLeod M.P."/>
            <person name="McPherson D."/>
            <person name="Merkulov G."/>
            <person name="Milshina N.V."/>
            <person name="Mobarry C."/>
            <person name="Morris J."/>
            <person name="Moshrefi A."/>
            <person name="Mount S.M."/>
            <person name="Moy M."/>
            <person name="Murphy B."/>
            <person name="Murphy L."/>
            <person name="Muzny D.M."/>
            <person name="Nelson D.L."/>
            <person name="Nelson D.R."/>
            <person name="Nelson K.A."/>
            <person name="Nixon K."/>
            <person name="Nusskern D.R."/>
            <person name="Pacleb J.M."/>
            <person name="Palazzolo M."/>
            <person name="Pittman G.S."/>
            <person name="Pan S."/>
            <person name="Pollard J."/>
            <person name="Puri V."/>
            <person name="Reese M.G."/>
            <person name="Reinert K."/>
            <person name="Remington K."/>
            <person name="Saunders R.D.C."/>
            <person name="Scheeler F."/>
            <person name="Shen H."/>
            <person name="Shue B.C."/>
            <person name="Siden-Kiamos I."/>
            <person name="Simpson M."/>
            <person name="Skupski M.P."/>
            <person name="Smith T.J."/>
            <person name="Spier E."/>
            <person name="Spradling A.C."/>
            <person name="Stapleton M."/>
            <person name="Strong R."/>
            <person name="Sun E."/>
            <person name="Svirskas R."/>
            <person name="Tector C."/>
            <person name="Turner R."/>
            <person name="Venter E."/>
            <person name="Wang A.H."/>
            <person name="Wang X."/>
            <person name="Wang Z.-Y."/>
            <person name="Wassarman D.A."/>
            <person name="Weinstock G.M."/>
            <person name="Weissenbach J."/>
            <person name="Williams S.M."/>
            <person name="Woodage T."/>
            <person name="Worley K.C."/>
            <person name="Wu D."/>
            <person name="Yang S."/>
            <person name="Yao Q.A."/>
            <person name="Ye J."/>
            <person name="Yeh R.-F."/>
            <person name="Zaveri J.S."/>
            <person name="Zhan M."/>
            <person name="Zhang G."/>
            <person name="Zhao Q."/>
            <person name="Zheng L."/>
            <person name="Zheng X.H."/>
            <person name="Zhong F.N."/>
            <person name="Zhong W."/>
            <person name="Zhou X."/>
            <person name="Zhu S.C."/>
            <person name="Zhu X."/>
            <person name="Smith H.O."/>
            <person name="Gibbs R.A."/>
            <person name="Myers E.W."/>
            <person name="Rubin G.M."/>
            <person name="Venter J.C."/>
        </authorList>
    </citation>
    <scope>NUCLEOTIDE SEQUENCE [LARGE SCALE GENOMIC DNA]</scope>
    <source>
        <strain>Berkeley</strain>
    </source>
</reference>
<reference key="3">
    <citation type="journal article" date="2002" name="Genome Biol.">
        <title>Annotation of the Drosophila melanogaster euchromatic genome: a systematic review.</title>
        <authorList>
            <person name="Misra S."/>
            <person name="Crosby M.A."/>
            <person name="Mungall C.J."/>
            <person name="Matthews B.B."/>
            <person name="Campbell K.S."/>
            <person name="Hradecky P."/>
            <person name="Huang Y."/>
            <person name="Kaminker J.S."/>
            <person name="Millburn G.H."/>
            <person name="Prochnik S.E."/>
            <person name="Smith C.D."/>
            <person name="Tupy J.L."/>
            <person name="Whitfield E.J."/>
            <person name="Bayraktaroglu L."/>
            <person name="Berman B.P."/>
            <person name="Bettencourt B.R."/>
            <person name="Celniker S.E."/>
            <person name="de Grey A.D.N.J."/>
            <person name="Drysdale R.A."/>
            <person name="Harris N.L."/>
            <person name="Richter J."/>
            <person name="Russo S."/>
            <person name="Schroeder A.J."/>
            <person name="Shu S.Q."/>
            <person name="Stapleton M."/>
            <person name="Yamada C."/>
            <person name="Ashburner M."/>
            <person name="Gelbart W.M."/>
            <person name="Rubin G.M."/>
            <person name="Lewis S.E."/>
        </authorList>
    </citation>
    <scope>GENOME REANNOTATION</scope>
    <source>
        <strain>Berkeley</strain>
    </source>
</reference>
<reference key="4">
    <citation type="journal article" date="2002" name="Genome Biol.">
        <title>A Drosophila full-length cDNA resource.</title>
        <authorList>
            <person name="Stapleton M."/>
            <person name="Carlson J.W."/>
            <person name="Brokstein P."/>
            <person name="Yu C."/>
            <person name="Champe M."/>
            <person name="George R.A."/>
            <person name="Guarin H."/>
            <person name="Kronmiller B."/>
            <person name="Pacleb J.M."/>
            <person name="Park S."/>
            <person name="Wan K.H."/>
            <person name="Rubin G.M."/>
            <person name="Celniker S.E."/>
        </authorList>
    </citation>
    <scope>NUCLEOTIDE SEQUENCE [LARGE SCALE MRNA]</scope>
    <source>
        <strain>Berkeley</strain>
        <tissue>Embryo</tissue>
    </source>
</reference>
<reference key="5">
    <citation type="submission" date="2003-12" db="EMBL/GenBank/DDBJ databases">
        <authorList>
            <person name="Stapleton M."/>
            <person name="Brokstein P."/>
            <person name="Hong L."/>
            <person name="Agbayani A."/>
            <person name="Carlson J.W."/>
            <person name="Champe M."/>
            <person name="Chavez C."/>
            <person name="Dorsett V."/>
            <person name="Dresnek D."/>
            <person name="Farfan D."/>
            <person name="Frise E."/>
            <person name="George R.A."/>
            <person name="Gonzalez M."/>
            <person name="Guarin H."/>
            <person name="Kronmiller B."/>
            <person name="Li P.W."/>
            <person name="Liao G."/>
            <person name="Miranda A."/>
            <person name="Mungall C.J."/>
            <person name="Nunoo J."/>
            <person name="Pacleb J.M."/>
            <person name="Paragas V."/>
            <person name="Park S."/>
            <person name="Patel S."/>
            <person name="Phouanenavong S."/>
            <person name="Wan K.H."/>
            <person name="Yu C."/>
            <person name="Lewis S.E."/>
            <person name="Rubin G.M."/>
            <person name="Celniker S.E."/>
        </authorList>
    </citation>
    <scope>SEQUENCE REVISION</scope>
</reference>
<dbReference type="EC" id="3.2.1.20"/>
<dbReference type="EMBL" id="V00204">
    <property type="protein sequence ID" value="CAA23491.1"/>
    <property type="status" value="ALT_SEQ"/>
    <property type="molecule type" value="Genomic_DNA"/>
</dbReference>
<dbReference type="EMBL" id="AE013599">
    <property type="protein sequence ID" value="AAF59089.3"/>
    <property type="molecule type" value="Genomic_DNA"/>
</dbReference>
<dbReference type="EMBL" id="AY070626">
    <property type="protein sequence ID" value="AAL48097.2"/>
    <property type="status" value="ALT_INIT"/>
    <property type="molecule type" value="mRNA"/>
</dbReference>
<dbReference type="PIR" id="S07253">
    <property type="entry name" value="S07253"/>
</dbReference>
<dbReference type="RefSeq" id="NP_476627.3">
    <property type="nucleotide sequence ID" value="NM_057279.5"/>
</dbReference>
<dbReference type="SMR" id="P07190"/>
<dbReference type="BioGRID" id="61676">
    <property type="interactions" value="5"/>
</dbReference>
<dbReference type="FunCoup" id="P07190">
    <property type="interactions" value="51"/>
</dbReference>
<dbReference type="IntAct" id="P07190">
    <property type="interactions" value="2"/>
</dbReference>
<dbReference type="STRING" id="7227.FBpp0087838"/>
<dbReference type="CAZy" id="GH13">
    <property type="family name" value="Glycoside Hydrolase Family 13"/>
</dbReference>
<dbReference type="GlyCosmos" id="P07190">
    <property type="glycosylation" value="5 sites, No reported glycans"/>
</dbReference>
<dbReference type="GlyGen" id="P07190">
    <property type="glycosylation" value="5 sites"/>
</dbReference>
<dbReference type="PaxDb" id="7227-FBpp0087838"/>
<dbReference type="DNASU" id="35824"/>
<dbReference type="EnsemblMetazoa" id="FBtr0088759">
    <property type="protein sequence ID" value="FBpp0087838"/>
    <property type="gene ID" value="FBgn0002570"/>
</dbReference>
<dbReference type="GeneID" id="35824"/>
<dbReference type="KEGG" id="dme:Dmel_CG8696"/>
<dbReference type="AGR" id="FB:FBgn0002570"/>
<dbReference type="CTD" id="35824"/>
<dbReference type="FlyBase" id="FBgn0002570">
    <property type="gene designation" value="Mal-A1"/>
</dbReference>
<dbReference type="VEuPathDB" id="VectorBase:FBgn0002570"/>
<dbReference type="eggNOG" id="KOG0471">
    <property type="taxonomic scope" value="Eukaryota"/>
</dbReference>
<dbReference type="HOGENOM" id="CLU_006462_8_3_1"/>
<dbReference type="InParanoid" id="P07190"/>
<dbReference type="OMA" id="TENEWFT"/>
<dbReference type="OrthoDB" id="1740265at2759"/>
<dbReference type="PhylomeDB" id="P07190"/>
<dbReference type="Reactome" id="R-DME-352230">
    <property type="pathway name" value="Amino acid transport across the plasma membrane"/>
</dbReference>
<dbReference type="SignaLink" id="P07190"/>
<dbReference type="BioGRID-ORCS" id="35824">
    <property type="hits" value="0 hits in 1 CRISPR screen"/>
</dbReference>
<dbReference type="GenomeRNAi" id="35824"/>
<dbReference type="PRO" id="PR:P07190"/>
<dbReference type="Proteomes" id="UP000000803">
    <property type="component" value="Chromosome 2R"/>
</dbReference>
<dbReference type="Bgee" id="FBgn0002570">
    <property type="expression patterns" value="Expressed in enterocyte of anterior adult midgut epithelium in digestive tract and 43 other cell types or tissues"/>
</dbReference>
<dbReference type="GO" id="GO:0004558">
    <property type="term" value="F:alpha-1,4-glucosidase activity"/>
    <property type="evidence" value="ECO:0000250"/>
    <property type="project" value="FlyBase"/>
</dbReference>
<dbReference type="GO" id="GO:0005975">
    <property type="term" value="P:carbohydrate metabolic process"/>
    <property type="evidence" value="ECO:0007669"/>
    <property type="project" value="InterPro"/>
</dbReference>
<dbReference type="CDD" id="cd11328">
    <property type="entry name" value="AmyAc_maltase"/>
    <property type="match status" value="1"/>
</dbReference>
<dbReference type="FunFam" id="3.90.400.10:FF:000001">
    <property type="entry name" value="Maltase A3, isoform A"/>
    <property type="match status" value="1"/>
</dbReference>
<dbReference type="Gene3D" id="3.20.20.80">
    <property type="entry name" value="Glycosidases"/>
    <property type="match status" value="1"/>
</dbReference>
<dbReference type="Gene3D" id="2.60.40.1180">
    <property type="entry name" value="Golgi alpha-mannosidase II"/>
    <property type="match status" value="1"/>
</dbReference>
<dbReference type="Gene3D" id="3.90.400.10">
    <property type="entry name" value="Oligo-1,6-glucosidase, Domain 2"/>
    <property type="match status" value="1"/>
</dbReference>
<dbReference type="InterPro" id="IPR006047">
    <property type="entry name" value="Glyco_hydro_13_cat_dom"/>
</dbReference>
<dbReference type="InterPro" id="IPR013780">
    <property type="entry name" value="Glyco_hydro_b"/>
</dbReference>
<dbReference type="InterPro" id="IPR017853">
    <property type="entry name" value="Glycoside_hydrolase_SF"/>
</dbReference>
<dbReference type="InterPro" id="IPR045857">
    <property type="entry name" value="O16G_dom_2"/>
</dbReference>
<dbReference type="PANTHER" id="PTHR10357">
    <property type="entry name" value="ALPHA-AMYLASE FAMILY MEMBER"/>
    <property type="match status" value="1"/>
</dbReference>
<dbReference type="PANTHER" id="PTHR10357:SF233">
    <property type="entry name" value="MALTASE A1"/>
    <property type="match status" value="1"/>
</dbReference>
<dbReference type="Pfam" id="PF00128">
    <property type="entry name" value="Alpha-amylase"/>
    <property type="match status" value="1"/>
</dbReference>
<dbReference type="SMART" id="SM00642">
    <property type="entry name" value="Aamy"/>
    <property type="match status" value="1"/>
</dbReference>
<dbReference type="SUPFAM" id="SSF51445">
    <property type="entry name" value="(Trans)glycosidases"/>
    <property type="match status" value="1"/>
</dbReference>
<proteinExistence type="evidence at transcript level"/>
<keyword id="KW-0325">Glycoprotein</keyword>
<keyword id="KW-0326">Glycosidase</keyword>
<keyword id="KW-0378">Hydrolase</keyword>
<keyword id="KW-1185">Reference proteome</keyword>
<keyword id="KW-0732">Signal</keyword>
<accession>P07190</accession>
<accession>Q9V4T6</accession>
<comment type="catalytic activity">
    <reaction>
        <text>Hydrolysis of terminal, non-reducing (1-&gt;4)-linked alpha-D-glucose residues with release of alpha-D-glucose.</text>
        <dbReference type="EC" id="3.2.1.20"/>
    </reaction>
</comment>
<comment type="developmental stage">
    <text evidence="3">One of the proteins expressed by the 44D cuticle gene cluster. Expressed in first, second and early 3rd instar larvae and in adults, but not in embryos or pupae.</text>
</comment>
<comment type="similarity">
    <text evidence="4">Belongs to the glycosyl hydrolase 13 family.</text>
</comment>
<comment type="sequence caution" evidence="4">
    <conflict type="erroneous initiation">
        <sequence resource="EMBL-CDS" id="AAL48097"/>
    </conflict>
    <text>Extended N-terminus.</text>
</comment>
<organism>
    <name type="scientific">Drosophila melanogaster</name>
    <name type="common">Fruit fly</name>
    <dbReference type="NCBI Taxonomy" id="7227"/>
    <lineage>
        <taxon>Eukaryota</taxon>
        <taxon>Metazoa</taxon>
        <taxon>Ecdysozoa</taxon>
        <taxon>Arthropoda</taxon>
        <taxon>Hexapoda</taxon>
        <taxon>Insecta</taxon>
        <taxon>Pterygota</taxon>
        <taxon>Neoptera</taxon>
        <taxon>Endopterygota</taxon>
        <taxon>Diptera</taxon>
        <taxon>Brachycera</taxon>
        <taxon>Muscomorpha</taxon>
        <taxon>Ephydroidea</taxon>
        <taxon>Drosophilidae</taxon>
        <taxon>Drosophila</taxon>
        <taxon>Sophophora</taxon>
    </lineage>
</organism>
<feature type="signal peptide" evidence="2">
    <location>
        <begin position="1"/>
        <end position="19"/>
    </location>
</feature>
<feature type="chain" id="PRO_0000001447" description="Maltase A1">
    <location>
        <begin position="20"/>
        <end position="577"/>
    </location>
</feature>
<feature type="active site" description="Nucleophile" evidence="1">
    <location>
        <position position="221"/>
    </location>
</feature>
<feature type="active site" description="Proton donor" evidence="1">
    <location>
        <position position="297"/>
    </location>
</feature>
<feature type="site" description="Transition state stabilizer" evidence="1">
    <location>
        <position position="363"/>
    </location>
</feature>
<feature type="glycosylation site" description="N-linked (GlcNAc...) asparagine" evidence="2">
    <location>
        <position position="119"/>
    </location>
</feature>
<feature type="glycosylation site" description="N-linked (GlcNAc...) asparagine" evidence="2">
    <location>
        <position position="151"/>
    </location>
</feature>
<feature type="glycosylation site" description="N-linked (GlcNAc...) asparagine" evidence="2">
    <location>
        <position position="244"/>
    </location>
</feature>
<feature type="glycosylation site" description="N-linked (GlcNAc...) asparagine" evidence="2">
    <location>
        <position position="315"/>
    </location>
</feature>
<feature type="glycosylation site" description="N-linked (GlcNAc...) asparagine" evidence="2">
    <location>
        <position position="331"/>
    </location>
</feature>
<gene>
    <name type="primary">Mal-A1</name>
    <name type="synonym">LvpH</name>
    <name type="ORF">CG8696</name>
</gene>
<sequence length="577" mass="66386">MRPQSAACLLLAIVGFVGATEWWESGNYYQIYPRSFRDSDGDGIGDLNGVTEKLQYLKDIGFTGTWLSPIFKSPMVDFGYDISDFYQIHPEYGTMEDFERMIAKAKEVGIKIILDFVPNHSSTENEWFTKSVDSDPVYKDFYIWHDGKINNETGEREPPSNWNSEFRYSAWEWNEVRQQYYLHQFAIQQADLNYRNPAVVNEMKNVIRFWLGKGVSGFRIDAVPYLFEVDLDRYNQYPDEPLTNDSVNCPDPDDHCYTQHIYTQDMPETIDMVYQWRELVDEFHVENGGDKRLLMTEAYTSFENIMTYYGNGVRNGSHIPFNFDFLTSINNASKAGEYVEHIKKWMDAMPEGVYANWVLGNHDNKRVASRFGVQRTDLINILLQTLPGHAVTYNGEELGMTDVWISWEDTVDPNACNSDPDNYYARSRDPARSPYQWDASSKAGFTSADHTWLPVADDYKTNNALQQLRAPRSHLQIFKKLVRVRKEPSFRQGELNIQAIDDDVIIYSRQKTGSDLYVIVLNLGSTSKTLDLTKYYELGTQAEVITTSLSSQYIDGDVIKSTEFVANPYVGTVLVAV</sequence>